<dbReference type="EMBL" id="AF077409">
    <property type="protein sequence ID" value="AAC28223.1"/>
    <property type="status" value="ALT_SEQ"/>
    <property type="molecule type" value="Genomic_DNA"/>
</dbReference>
<dbReference type="EMBL" id="AL161498">
    <property type="protein sequence ID" value="CAB80818.1"/>
    <property type="status" value="ALT_SEQ"/>
    <property type="molecule type" value="Genomic_DNA"/>
</dbReference>
<dbReference type="EMBL" id="CP002687">
    <property type="protein sequence ID" value="AEE82360.1"/>
    <property type="molecule type" value="Genomic_DNA"/>
</dbReference>
<dbReference type="PIR" id="T01868">
    <property type="entry name" value="T01868"/>
</dbReference>
<dbReference type="RefSeq" id="NP_192304.2">
    <property type="nucleotide sequence ID" value="NM_116633.2"/>
</dbReference>
<dbReference type="SMR" id="O81514"/>
<dbReference type="FunCoup" id="O81514">
    <property type="interactions" value="1821"/>
</dbReference>
<dbReference type="STRING" id="3702.O81514"/>
<dbReference type="TCDB" id="2.A.7.9.19">
    <property type="family name" value="the drug/metabolite transporter (dmt) superfamily"/>
</dbReference>
<dbReference type="PaxDb" id="3702-AT4G03950.1"/>
<dbReference type="EnsemblPlants" id="AT4G03950.1">
    <property type="protein sequence ID" value="AT4G03950.1"/>
    <property type="gene ID" value="AT4G03950"/>
</dbReference>
<dbReference type="GeneID" id="825705"/>
<dbReference type="Gramene" id="AT4G03950.1">
    <property type="protein sequence ID" value="AT4G03950.1"/>
    <property type="gene ID" value="AT4G03950"/>
</dbReference>
<dbReference type="KEGG" id="ath:AT4G03950"/>
<dbReference type="Araport" id="AT4G03950"/>
<dbReference type="TAIR" id="AT4G03950"/>
<dbReference type="eggNOG" id="KOG1441">
    <property type="taxonomic scope" value="Eukaryota"/>
</dbReference>
<dbReference type="HOGENOM" id="CLU_019048_0_1_1"/>
<dbReference type="InParanoid" id="O81514"/>
<dbReference type="PhylomeDB" id="O81514"/>
<dbReference type="Proteomes" id="UP000006548">
    <property type="component" value="Chromosome 4"/>
</dbReference>
<dbReference type="ExpressionAtlas" id="O81514">
    <property type="expression patterns" value="baseline and differential"/>
</dbReference>
<dbReference type="GO" id="GO:0016020">
    <property type="term" value="C:membrane"/>
    <property type="evidence" value="ECO:0007669"/>
    <property type="project" value="UniProtKB-SubCell"/>
</dbReference>
<dbReference type="InterPro" id="IPR004853">
    <property type="entry name" value="Sugar_P_trans_dom"/>
</dbReference>
<dbReference type="InterPro" id="IPR050186">
    <property type="entry name" value="TPT_transporter"/>
</dbReference>
<dbReference type="PANTHER" id="PTHR11132">
    <property type="entry name" value="SOLUTE CARRIER FAMILY 35"/>
    <property type="match status" value="1"/>
</dbReference>
<dbReference type="Pfam" id="PF03151">
    <property type="entry name" value="TPT"/>
    <property type="match status" value="2"/>
</dbReference>
<gene>
    <name type="ordered locus">At4g03950</name>
    <name type="ORF">T24M8.5</name>
</gene>
<name>GPTP1_ARATH</name>
<organism>
    <name type="scientific">Arabidopsis thaliana</name>
    <name type="common">Mouse-ear cress</name>
    <dbReference type="NCBI Taxonomy" id="3702"/>
    <lineage>
        <taxon>Eukaryota</taxon>
        <taxon>Viridiplantae</taxon>
        <taxon>Streptophyta</taxon>
        <taxon>Embryophyta</taxon>
        <taxon>Tracheophyta</taxon>
        <taxon>Spermatophyta</taxon>
        <taxon>Magnoliopsida</taxon>
        <taxon>eudicotyledons</taxon>
        <taxon>Gunneridae</taxon>
        <taxon>Pentapetalae</taxon>
        <taxon>rosids</taxon>
        <taxon>malvids</taxon>
        <taxon>Brassicales</taxon>
        <taxon>Brassicaceae</taxon>
        <taxon>Camelineae</taxon>
        <taxon>Arabidopsis</taxon>
    </lineage>
</organism>
<proteinExistence type="uncertain"/>
<accession>O81514</accession>
<feature type="chain" id="PRO_0000406097" description="Putative glucose-6-phosphate/phosphate-translocator-like protein 1">
    <location>
        <begin position="1"/>
        <end position="277"/>
    </location>
</feature>
<feature type="transmembrane region" description="Helical" evidence="1">
    <location>
        <begin position="8"/>
        <end position="28"/>
    </location>
</feature>
<feature type="transmembrane region" description="Helical" evidence="1">
    <location>
        <begin position="46"/>
        <end position="66"/>
    </location>
</feature>
<feature type="transmembrane region" description="Helical" evidence="1">
    <location>
        <begin position="124"/>
        <end position="143"/>
    </location>
</feature>
<feature type="transmembrane region" description="Helical" evidence="1">
    <location>
        <begin position="153"/>
        <end position="173"/>
    </location>
</feature>
<feature type="transmembrane region" description="Helical" evidence="1">
    <location>
        <begin position="230"/>
        <end position="250"/>
    </location>
</feature>
<comment type="subcellular location">
    <subcellularLocation>
        <location evidence="2">Membrane</location>
        <topology evidence="2">Multi-pass membrane protein</topology>
    </subcellularLocation>
</comment>
<comment type="similarity">
    <text evidence="2">Belongs to the TPT transporter family. GPT (TC 2.A.7.9) subfamily.</text>
</comment>
<comment type="caution">
    <text evidence="2">Could be the product of a pseudogene.</text>
</comment>
<comment type="sequence caution" evidence="2">
    <conflict type="erroneous gene model prediction">
        <sequence resource="EMBL-CDS" id="AAC28223"/>
    </conflict>
</comment>
<comment type="sequence caution" evidence="2">
    <conflict type="erroneous gene model prediction">
        <sequence resource="EMBL-CDS" id="CAB80818"/>
    </conflict>
</comment>
<protein>
    <recommendedName>
        <fullName>Putative glucose-6-phosphate/phosphate-translocator-like protein 1</fullName>
    </recommendedName>
</protein>
<sequence length="277" mass="30602">MISSIKPVLPSLTAIVGIGIYFAIWWALNGVFNNYNKKVLNAFPYLWLTLTLSLACGSLMMLVSWVALAHTIGHVEAIVSMSKVVVSFTHTSSKAVRQPLASLSQASSWARCALAAVMELNFNMIGFMGAMISNLAFVFRNIFSKKGMKGKSVSVMNYYACLSMMSLLIVTPFANSVEGPQMWADGWQNDVSKSDQTLSSKWVVAHSVFYHLYNQVSYIPRCLNHHLPNPLKHVNALGAAIAILGTFIYSQIKNRVKKNHILLVLCLGMLEPLVITL</sequence>
<keyword id="KW-0472">Membrane</keyword>
<keyword id="KW-1185">Reference proteome</keyword>
<keyword id="KW-0762">Sugar transport</keyword>
<keyword id="KW-0812">Transmembrane</keyword>
<keyword id="KW-1133">Transmembrane helix</keyword>
<keyword id="KW-0813">Transport</keyword>
<reference key="1">
    <citation type="journal article" date="1999" name="Nature">
        <title>Sequence and analysis of chromosome 4 of the plant Arabidopsis thaliana.</title>
        <authorList>
            <person name="Mayer K.F.X."/>
            <person name="Schueller C."/>
            <person name="Wambutt R."/>
            <person name="Murphy G."/>
            <person name="Volckaert G."/>
            <person name="Pohl T."/>
            <person name="Duesterhoeft A."/>
            <person name="Stiekema W."/>
            <person name="Entian K.-D."/>
            <person name="Terryn N."/>
            <person name="Harris B."/>
            <person name="Ansorge W."/>
            <person name="Brandt P."/>
            <person name="Grivell L.A."/>
            <person name="Rieger M."/>
            <person name="Weichselgartner M."/>
            <person name="de Simone V."/>
            <person name="Obermaier B."/>
            <person name="Mache R."/>
            <person name="Mueller M."/>
            <person name="Kreis M."/>
            <person name="Delseny M."/>
            <person name="Puigdomenech P."/>
            <person name="Watson M."/>
            <person name="Schmidtheini T."/>
            <person name="Reichert B."/>
            <person name="Portetelle D."/>
            <person name="Perez-Alonso M."/>
            <person name="Boutry M."/>
            <person name="Bancroft I."/>
            <person name="Vos P."/>
            <person name="Hoheisel J."/>
            <person name="Zimmermann W."/>
            <person name="Wedler H."/>
            <person name="Ridley P."/>
            <person name="Langham S.-A."/>
            <person name="McCullagh B."/>
            <person name="Bilham L."/>
            <person name="Robben J."/>
            <person name="van der Schueren J."/>
            <person name="Grymonprez B."/>
            <person name="Chuang Y.-J."/>
            <person name="Vandenbussche F."/>
            <person name="Braeken M."/>
            <person name="Weltjens I."/>
            <person name="Voet M."/>
            <person name="Bastiaens I."/>
            <person name="Aert R."/>
            <person name="Defoor E."/>
            <person name="Weitzenegger T."/>
            <person name="Bothe G."/>
            <person name="Ramsperger U."/>
            <person name="Hilbert H."/>
            <person name="Braun M."/>
            <person name="Holzer E."/>
            <person name="Brandt A."/>
            <person name="Peters S."/>
            <person name="van Staveren M."/>
            <person name="Dirkse W."/>
            <person name="Mooijman P."/>
            <person name="Klein Lankhorst R."/>
            <person name="Rose M."/>
            <person name="Hauf J."/>
            <person name="Koetter P."/>
            <person name="Berneiser S."/>
            <person name="Hempel S."/>
            <person name="Feldpausch M."/>
            <person name="Lamberth S."/>
            <person name="Van den Daele H."/>
            <person name="De Keyser A."/>
            <person name="Buysshaert C."/>
            <person name="Gielen J."/>
            <person name="Villarroel R."/>
            <person name="De Clercq R."/>
            <person name="van Montagu M."/>
            <person name="Rogers J."/>
            <person name="Cronin A."/>
            <person name="Quail M.A."/>
            <person name="Bray-Allen S."/>
            <person name="Clark L."/>
            <person name="Doggett J."/>
            <person name="Hall S."/>
            <person name="Kay M."/>
            <person name="Lennard N."/>
            <person name="McLay K."/>
            <person name="Mayes R."/>
            <person name="Pettett A."/>
            <person name="Rajandream M.A."/>
            <person name="Lyne M."/>
            <person name="Benes V."/>
            <person name="Rechmann S."/>
            <person name="Borkova D."/>
            <person name="Bloecker H."/>
            <person name="Scharfe M."/>
            <person name="Grimm M."/>
            <person name="Loehnert T.-H."/>
            <person name="Dose S."/>
            <person name="de Haan M."/>
            <person name="Maarse A.C."/>
            <person name="Schaefer M."/>
            <person name="Mueller-Auer S."/>
            <person name="Gabel C."/>
            <person name="Fuchs M."/>
            <person name="Fartmann B."/>
            <person name="Granderath K."/>
            <person name="Dauner D."/>
            <person name="Herzl A."/>
            <person name="Neumann S."/>
            <person name="Argiriou A."/>
            <person name="Vitale D."/>
            <person name="Liguori R."/>
            <person name="Piravandi E."/>
            <person name="Massenet O."/>
            <person name="Quigley F."/>
            <person name="Clabauld G."/>
            <person name="Muendlein A."/>
            <person name="Felber R."/>
            <person name="Schnabl S."/>
            <person name="Hiller R."/>
            <person name="Schmidt W."/>
            <person name="Lecharny A."/>
            <person name="Aubourg S."/>
            <person name="Chefdor F."/>
            <person name="Cooke R."/>
            <person name="Berger C."/>
            <person name="Monfort A."/>
            <person name="Casacuberta E."/>
            <person name="Gibbons T."/>
            <person name="Weber N."/>
            <person name="Vandenbol M."/>
            <person name="Bargues M."/>
            <person name="Terol J."/>
            <person name="Torres A."/>
            <person name="Perez-Perez A."/>
            <person name="Purnelle B."/>
            <person name="Bent E."/>
            <person name="Johnson S."/>
            <person name="Tacon D."/>
            <person name="Jesse T."/>
            <person name="Heijnen L."/>
            <person name="Schwarz S."/>
            <person name="Scholler P."/>
            <person name="Heber S."/>
            <person name="Francs P."/>
            <person name="Bielke C."/>
            <person name="Frishman D."/>
            <person name="Haase D."/>
            <person name="Lemcke K."/>
            <person name="Mewes H.-W."/>
            <person name="Stocker S."/>
            <person name="Zaccaria P."/>
            <person name="Bevan M."/>
            <person name="Wilson R.K."/>
            <person name="de la Bastide M."/>
            <person name="Habermann K."/>
            <person name="Parnell L."/>
            <person name="Dedhia N."/>
            <person name="Gnoj L."/>
            <person name="Schutz K."/>
            <person name="Huang E."/>
            <person name="Spiegel L."/>
            <person name="Sekhon M."/>
            <person name="Murray J."/>
            <person name="Sheet P."/>
            <person name="Cordes M."/>
            <person name="Abu-Threideh J."/>
            <person name="Stoneking T."/>
            <person name="Kalicki J."/>
            <person name="Graves T."/>
            <person name="Harmon G."/>
            <person name="Edwards J."/>
            <person name="Latreille P."/>
            <person name="Courtney L."/>
            <person name="Cloud J."/>
            <person name="Abbott A."/>
            <person name="Scott K."/>
            <person name="Johnson D."/>
            <person name="Minx P."/>
            <person name="Bentley D."/>
            <person name="Fulton B."/>
            <person name="Miller N."/>
            <person name="Greco T."/>
            <person name="Kemp K."/>
            <person name="Kramer J."/>
            <person name="Fulton L."/>
            <person name="Mardis E."/>
            <person name="Dante M."/>
            <person name="Pepin K."/>
            <person name="Hillier L.W."/>
            <person name="Nelson J."/>
            <person name="Spieth J."/>
            <person name="Ryan E."/>
            <person name="Andrews S."/>
            <person name="Geisel C."/>
            <person name="Layman D."/>
            <person name="Du H."/>
            <person name="Ali J."/>
            <person name="Berghoff A."/>
            <person name="Jones K."/>
            <person name="Drone K."/>
            <person name="Cotton M."/>
            <person name="Joshu C."/>
            <person name="Antonoiu B."/>
            <person name="Zidanic M."/>
            <person name="Strong C."/>
            <person name="Sun H."/>
            <person name="Lamar B."/>
            <person name="Yordan C."/>
            <person name="Ma P."/>
            <person name="Zhong J."/>
            <person name="Preston R."/>
            <person name="Vil D."/>
            <person name="Shekher M."/>
            <person name="Matero A."/>
            <person name="Shah R."/>
            <person name="Swaby I.K."/>
            <person name="O'Shaughnessy A."/>
            <person name="Rodriguez M."/>
            <person name="Hoffman J."/>
            <person name="Till S."/>
            <person name="Granat S."/>
            <person name="Shohdy N."/>
            <person name="Hasegawa A."/>
            <person name="Hameed A."/>
            <person name="Lodhi M."/>
            <person name="Johnson A."/>
            <person name="Chen E."/>
            <person name="Marra M.A."/>
            <person name="Martienssen R."/>
            <person name="McCombie W.R."/>
        </authorList>
    </citation>
    <scope>NUCLEOTIDE SEQUENCE [LARGE SCALE GENOMIC DNA]</scope>
    <source>
        <strain>cv. Columbia</strain>
    </source>
</reference>
<reference key="2">
    <citation type="journal article" date="2017" name="Plant J.">
        <title>Araport11: a complete reannotation of the Arabidopsis thaliana reference genome.</title>
        <authorList>
            <person name="Cheng C.Y."/>
            <person name="Krishnakumar V."/>
            <person name="Chan A.P."/>
            <person name="Thibaud-Nissen F."/>
            <person name="Schobel S."/>
            <person name="Town C.D."/>
        </authorList>
    </citation>
    <scope>GENOME REANNOTATION</scope>
    <source>
        <strain>cv. Columbia</strain>
    </source>
</reference>
<reference key="3">
    <citation type="journal article" date="2014" name="Proc. Natl. Acad. Sci. U.S.A.">
        <title>The Golgi localized bifunctional UDP-rhamnose/UDP-galactose transporter family of Arabidopsis.</title>
        <authorList>
            <person name="Rautengarten C."/>
            <person name="Ebert B."/>
            <person name="Moreno I."/>
            <person name="Temple H."/>
            <person name="Herter T."/>
            <person name="Link B."/>
            <person name="Donas-Cofre D."/>
            <person name="Moreno A."/>
            <person name="Saez-Aguayo S."/>
            <person name="Blanco F."/>
            <person name="Mortimer J.C."/>
            <person name="Schultink A."/>
            <person name="Reiter W.D."/>
            <person name="Dupree P."/>
            <person name="Pauly M."/>
            <person name="Heazlewood J.L."/>
            <person name="Scheller H.V."/>
            <person name="Orellana A."/>
        </authorList>
    </citation>
    <scope>GENE FAMILY</scope>
</reference>
<evidence type="ECO:0000255" key="1"/>
<evidence type="ECO:0000305" key="2"/>